<sequence>MLEDLRLYQLISPSLPVGSFTYSQGLEWAIEKGWVTNVTELKHWLSNQLMDSLATLELPVLAKLTQLLQQEEWQQAQDWCDFIIANRETKELRLEERQRGLAFSMLLPKLGIELNQTTLPMVKQTQVAAFALAANHWNLTPTKLAAAYAWGWLENAVIVGIKLVPLGQSAGQQLLLEMADVIPQAVEKSQHWPEHLIGSFTPAQVLASSRHESQYTRLFRS</sequence>
<organism>
    <name type="scientific">Aliivibrio fischeri (strain ATCC 700601 / ES114)</name>
    <name type="common">Vibrio fischeri</name>
    <dbReference type="NCBI Taxonomy" id="312309"/>
    <lineage>
        <taxon>Bacteria</taxon>
        <taxon>Pseudomonadati</taxon>
        <taxon>Pseudomonadota</taxon>
        <taxon>Gammaproteobacteria</taxon>
        <taxon>Vibrionales</taxon>
        <taxon>Vibrionaceae</taxon>
        <taxon>Aliivibrio</taxon>
    </lineage>
</organism>
<evidence type="ECO:0000255" key="1">
    <source>
        <dbReference type="HAMAP-Rule" id="MF_01385"/>
    </source>
</evidence>
<accession>Q5E730</accession>
<keyword id="KW-0143">Chaperone</keyword>
<keyword id="KW-0963">Cytoplasm</keyword>
<keyword id="KW-0996">Nickel insertion</keyword>
<keyword id="KW-1185">Reference proteome</keyword>
<reference key="1">
    <citation type="journal article" date="2005" name="Proc. Natl. Acad. Sci. U.S.A.">
        <title>Complete genome sequence of Vibrio fischeri: a symbiotic bacterium with pathogenic congeners.</title>
        <authorList>
            <person name="Ruby E.G."/>
            <person name="Urbanowski M."/>
            <person name="Campbell J."/>
            <person name="Dunn A."/>
            <person name="Faini M."/>
            <person name="Gunsalus R."/>
            <person name="Lostroh P."/>
            <person name="Lupp C."/>
            <person name="McCann J."/>
            <person name="Millikan D."/>
            <person name="Schaefer A."/>
            <person name="Stabb E."/>
            <person name="Stevens A."/>
            <person name="Visick K."/>
            <person name="Whistler C."/>
            <person name="Greenberg E.P."/>
        </authorList>
    </citation>
    <scope>NUCLEOTIDE SEQUENCE [LARGE SCALE GENOMIC DNA]</scope>
    <source>
        <strain>ATCC 700601 / ES114</strain>
    </source>
</reference>
<dbReference type="EMBL" id="CP000020">
    <property type="protein sequence ID" value="AAW85166.1"/>
    <property type="molecule type" value="Genomic_DNA"/>
</dbReference>
<dbReference type="RefSeq" id="WP_005418029.1">
    <property type="nucleotide sequence ID" value="NC_006840.2"/>
</dbReference>
<dbReference type="RefSeq" id="YP_204054.1">
    <property type="nucleotide sequence ID" value="NC_006840.2"/>
</dbReference>
<dbReference type="SMR" id="Q5E730"/>
<dbReference type="STRING" id="312309.VF_0671"/>
<dbReference type="DNASU" id="3277360"/>
<dbReference type="EnsemblBacteria" id="AAW85166">
    <property type="protein sequence ID" value="AAW85166"/>
    <property type="gene ID" value="VF_0671"/>
</dbReference>
<dbReference type="GeneID" id="54163326"/>
<dbReference type="KEGG" id="vfi:VF_0671"/>
<dbReference type="PATRIC" id="fig|312309.11.peg.664"/>
<dbReference type="eggNOG" id="COG0830">
    <property type="taxonomic scope" value="Bacteria"/>
</dbReference>
<dbReference type="HOGENOM" id="CLU_049215_2_1_6"/>
<dbReference type="OrthoDB" id="9798772at2"/>
<dbReference type="Proteomes" id="UP000000537">
    <property type="component" value="Chromosome I"/>
</dbReference>
<dbReference type="GO" id="GO:0005737">
    <property type="term" value="C:cytoplasm"/>
    <property type="evidence" value="ECO:0007669"/>
    <property type="project" value="UniProtKB-SubCell"/>
</dbReference>
<dbReference type="GO" id="GO:0016151">
    <property type="term" value="F:nickel cation binding"/>
    <property type="evidence" value="ECO:0007669"/>
    <property type="project" value="UniProtKB-UniRule"/>
</dbReference>
<dbReference type="Gene3D" id="1.10.4190.10">
    <property type="entry name" value="Urease accessory protein UreF"/>
    <property type="match status" value="1"/>
</dbReference>
<dbReference type="HAMAP" id="MF_01385">
    <property type="entry name" value="UreF"/>
    <property type="match status" value="1"/>
</dbReference>
<dbReference type="InterPro" id="IPR002639">
    <property type="entry name" value="UreF"/>
</dbReference>
<dbReference type="InterPro" id="IPR038277">
    <property type="entry name" value="UreF_sf"/>
</dbReference>
<dbReference type="PANTHER" id="PTHR33620">
    <property type="entry name" value="UREASE ACCESSORY PROTEIN F"/>
    <property type="match status" value="1"/>
</dbReference>
<dbReference type="PANTHER" id="PTHR33620:SF1">
    <property type="entry name" value="UREASE ACCESSORY PROTEIN F"/>
    <property type="match status" value="1"/>
</dbReference>
<dbReference type="Pfam" id="PF01730">
    <property type="entry name" value="UreF"/>
    <property type="match status" value="1"/>
</dbReference>
<dbReference type="PIRSF" id="PIRSF009467">
    <property type="entry name" value="Ureas_acces_UreF"/>
    <property type="match status" value="1"/>
</dbReference>
<protein>
    <recommendedName>
        <fullName evidence="1">Urease accessory protein UreF</fullName>
    </recommendedName>
</protein>
<gene>
    <name evidence="1" type="primary">ureF</name>
    <name type="ordered locus">VF_0671</name>
</gene>
<feature type="chain" id="PRO_0000344200" description="Urease accessory protein UreF">
    <location>
        <begin position="1"/>
        <end position="221"/>
    </location>
</feature>
<proteinExistence type="inferred from homology"/>
<name>UREF_ALIF1</name>
<comment type="function">
    <text evidence="1">Required for maturation of urease via the functional incorporation of the urease nickel metallocenter.</text>
</comment>
<comment type="subunit">
    <text evidence="1">UreD, UreF and UreG form a complex that acts as a GTP-hydrolysis-dependent molecular chaperone, activating the urease apoprotein by helping to assemble the nickel containing metallocenter of UreC. The UreE protein probably delivers the nickel.</text>
</comment>
<comment type="subcellular location">
    <subcellularLocation>
        <location evidence="1">Cytoplasm</location>
    </subcellularLocation>
</comment>
<comment type="similarity">
    <text evidence="1">Belongs to the UreF family.</text>
</comment>